<organism>
    <name type="scientific">Staphylococcus epidermidis (strain ATCC 35984 / DSM 28319 / BCRC 17069 / CCUG 31568 / BM 3577 / RP62A)</name>
    <dbReference type="NCBI Taxonomy" id="176279"/>
    <lineage>
        <taxon>Bacteria</taxon>
        <taxon>Bacillati</taxon>
        <taxon>Bacillota</taxon>
        <taxon>Bacilli</taxon>
        <taxon>Bacillales</taxon>
        <taxon>Staphylococcaceae</taxon>
        <taxon>Staphylococcus</taxon>
    </lineage>
</organism>
<comment type="function">
    <text evidence="1">Plays a critical role in recombination and DNA repair. Helps process Holliday junction intermediates to mature products by catalyzing branch migration. Has replication fork regression activity, unwinds stalled or blocked replication forks to make a HJ that can be resolved. Has a DNA unwinding activity characteristic of a DNA helicase with 3'-5' polarity (By similarity).</text>
</comment>
<comment type="catalytic activity">
    <reaction evidence="1">
        <text>Couples ATP hydrolysis with the unwinding of duplex DNA by translocating in the 3'-5' direction.</text>
        <dbReference type="EC" id="5.6.2.4"/>
    </reaction>
</comment>
<comment type="catalytic activity">
    <reaction evidence="1">
        <text>ATP + H2O = ADP + phosphate + H(+)</text>
        <dbReference type="Rhea" id="RHEA:13065"/>
        <dbReference type="ChEBI" id="CHEBI:15377"/>
        <dbReference type="ChEBI" id="CHEBI:15378"/>
        <dbReference type="ChEBI" id="CHEBI:30616"/>
        <dbReference type="ChEBI" id="CHEBI:43474"/>
        <dbReference type="ChEBI" id="CHEBI:456216"/>
        <dbReference type="EC" id="5.6.2.4"/>
    </reaction>
</comment>
<comment type="subunit">
    <text evidence="2">Monomer (By similarity).</text>
</comment>
<comment type="domain">
    <text evidence="2">The wedge domain within the N-terminus inserts into the replication fork junction, where the lagging and leading strand split (By similarity).</text>
</comment>
<comment type="similarity">
    <text evidence="5">Belongs to the helicase family. RecG subfamily.</text>
</comment>
<dbReference type="EC" id="5.6.2.4" evidence="1"/>
<dbReference type="EMBL" id="CP000029">
    <property type="protein sequence ID" value="AAW54116.1"/>
    <property type="molecule type" value="Genomic_DNA"/>
</dbReference>
<dbReference type="RefSeq" id="WP_002486268.1">
    <property type="nucleotide sequence ID" value="NC_002976.3"/>
</dbReference>
<dbReference type="SMR" id="Q5HPW4"/>
<dbReference type="STRING" id="176279.SERP0793"/>
<dbReference type="KEGG" id="ser:SERP0793"/>
<dbReference type="eggNOG" id="COG1200">
    <property type="taxonomic scope" value="Bacteria"/>
</dbReference>
<dbReference type="HOGENOM" id="CLU_005122_7_1_9"/>
<dbReference type="Proteomes" id="UP000000531">
    <property type="component" value="Chromosome"/>
</dbReference>
<dbReference type="GO" id="GO:0005524">
    <property type="term" value="F:ATP binding"/>
    <property type="evidence" value="ECO:0007669"/>
    <property type="project" value="UniProtKB-KW"/>
</dbReference>
<dbReference type="GO" id="GO:0016887">
    <property type="term" value="F:ATP hydrolysis activity"/>
    <property type="evidence" value="ECO:0007669"/>
    <property type="project" value="RHEA"/>
</dbReference>
<dbReference type="GO" id="GO:0003677">
    <property type="term" value="F:DNA binding"/>
    <property type="evidence" value="ECO:0007669"/>
    <property type="project" value="UniProtKB-KW"/>
</dbReference>
<dbReference type="GO" id="GO:0003678">
    <property type="term" value="F:DNA helicase activity"/>
    <property type="evidence" value="ECO:0007669"/>
    <property type="project" value="InterPro"/>
</dbReference>
<dbReference type="GO" id="GO:0006310">
    <property type="term" value="P:DNA recombination"/>
    <property type="evidence" value="ECO:0007669"/>
    <property type="project" value="UniProtKB-KW"/>
</dbReference>
<dbReference type="GO" id="GO:0006281">
    <property type="term" value="P:DNA repair"/>
    <property type="evidence" value="ECO:0007669"/>
    <property type="project" value="UniProtKB-KW"/>
</dbReference>
<dbReference type="CDD" id="cd17992">
    <property type="entry name" value="DEXHc_RecG"/>
    <property type="match status" value="1"/>
</dbReference>
<dbReference type="CDD" id="cd04488">
    <property type="entry name" value="RecG_wedge_OBF"/>
    <property type="match status" value="1"/>
</dbReference>
<dbReference type="CDD" id="cd18811">
    <property type="entry name" value="SF2_C_RecG"/>
    <property type="match status" value="1"/>
</dbReference>
<dbReference type="Gene3D" id="2.40.50.140">
    <property type="entry name" value="Nucleic acid-binding proteins"/>
    <property type="match status" value="1"/>
</dbReference>
<dbReference type="Gene3D" id="3.40.50.300">
    <property type="entry name" value="P-loop containing nucleotide triphosphate hydrolases"/>
    <property type="match status" value="2"/>
</dbReference>
<dbReference type="InterPro" id="IPR004609">
    <property type="entry name" value="ATP-dep_DNA_helicase_RecG"/>
</dbReference>
<dbReference type="InterPro" id="IPR011545">
    <property type="entry name" value="DEAD/DEAH_box_helicase_dom"/>
</dbReference>
<dbReference type="InterPro" id="IPR014001">
    <property type="entry name" value="Helicase_ATP-bd"/>
</dbReference>
<dbReference type="InterPro" id="IPR001650">
    <property type="entry name" value="Helicase_C-like"/>
</dbReference>
<dbReference type="InterPro" id="IPR012340">
    <property type="entry name" value="NA-bd_OB-fold"/>
</dbReference>
<dbReference type="InterPro" id="IPR027417">
    <property type="entry name" value="P-loop_NTPase"/>
</dbReference>
<dbReference type="InterPro" id="IPR047112">
    <property type="entry name" value="RecG/Mfd"/>
</dbReference>
<dbReference type="InterPro" id="IPR045562">
    <property type="entry name" value="RecG_dom3_C"/>
</dbReference>
<dbReference type="InterPro" id="IPR033454">
    <property type="entry name" value="RecG_wedge"/>
</dbReference>
<dbReference type="NCBIfam" id="NF008165">
    <property type="entry name" value="PRK10917.1-3"/>
    <property type="match status" value="1"/>
</dbReference>
<dbReference type="NCBIfam" id="NF008168">
    <property type="entry name" value="PRK10917.2-2"/>
    <property type="match status" value="1"/>
</dbReference>
<dbReference type="NCBIfam" id="TIGR00643">
    <property type="entry name" value="recG"/>
    <property type="match status" value="1"/>
</dbReference>
<dbReference type="PANTHER" id="PTHR47964">
    <property type="entry name" value="ATP-DEPENDENT DNA HELICASE HOMOLOG RECG, CHLOROPLASTIC"/>
    <property type="match status" value="1"/>
</dbReference>
<dbReference type="PANTHER" id="PTHR47964:SF1">
    <property type="entry name" value="ATP-DEPENDENT DNA HELICASE HOMOLOG RECG, CHLOROPLASTIC"/>
    <property type="match status" value="1"/>
</dbReference>
<dbReference type="Pfam" id="PF00270">
    <property type="entry name" value="DEAD"/>
    <property type="match status" value="1"/>
</dbReference>
<dbReference type="Pfam" id="PF00271">
    <property type="entry name" value="Helicase_C"/>
    <property type="match status" value="1"/>
</dbReference>
<dbReference type="Pfam" id="PF19833">
    <property type="entry name" value="RecG_dom3_C"/>
    <property type="match status" value="1"/>
</dbReference>
<dbReference type="Pfam" id="PF17191">
    <property type="entry name" value="RecG_wedge"/>
    <property type="match status" value="1"/>
</dbReference>
<dbReference type="SMART" id="SM00487">
    <property type="entry name" value="DEXDc"/>
    <property type="match status" value="1"/>
</dbReference>
<dbReference type="SMART" id="SM00490">
    <property type="entry name" value="HELICc"/>
    <property type="match status" value="1"/>
</dbReference>
<dbReference type="SUPFAM" id="SSF50249">
    <property type="entry name" value="Nucleic acid-binding proteins"/>
    <property type="match status" value="1"/>
</dbReference>
<dbReference type="SUPFAM" id="SSF52540">
    <property type="entry name" value="P-loop containing nucleoside triphosphate hydrolases"/>
    <property type="match status" value="2"/>
</dbReference>
<dbReference type="PROSITE" id="PS51192">
    <property type="entry name" value="HELICASE_ATP_BIND_1"/>
    <property type="match status" value="1"/>
</dbReference>
<dbReference type="PROSITE" id="PS51194">
    <property type="entry name" value="HELICASE_CTER"/>
    <property type="match status" value="1"/>
</dbReference>
<name>RECG_STAEQ</name>
<feature type="chain" id="PRO_0000102157" description="ATP-dependent DNA helicase RecG">
    <location>
        <begin position="1"/>
        <end position="682"/>
    </location>
</feature>
<feature type="domain" description="Helicase ATP-binding" evidence="3">
    <location>
        <begin position="275"/>
        <end position="435"/>
    </location>
</feature>
<feature type="domain" description="Helicase C-terminal" evidence="4">
    <location>
        <begin position="454"/>
        <end position="614"/>
    </location>
</feature>
<feature type="region of interest" description="Wedge domain" evidence="2">
    <location>
        <begin position="50"/>
        <end position="145"/>
    </location>
</feature>
<feature type="short sequence motif" description="DEAH box" evidence="3">
    <location>
        <begin position="388"/>
        <end position="391"/>
    </location>
</feature>
<feature type="binding site" evidence="3">
    <location>
        <begin position="288"/>
        <end position="295"/>
    </location>
    <ligand>
        <name>ATP</name>
        <dbReference type="ChEBI" id="CHEBI:30616"/>
    </ligand>
</feature>
<keyword id="KW-0067">ATP-binding</keyword>
<keyword id="KW-0227">DNA damage</keyword>
<keyword id="KW-0233">DNA recombination</keyword>
<keyword id="KW-0234">DNA repair</keyword>
<keyword id="KW-0238">DNA-binding</keyword>
<keyword id="KW-0347">Helicase</keyword>
<keyword id="KW-0378">Hydrolase</keyword>
<keyword id="KW-0413">Isomerase</keyword>
<keyword id="KW-0547">Nucleotide-binding</keyword>
<keyword id="KW-1185">Reference proteome</keyword>
<accession>Q5HPW4</accession>
<protein>
    <recommendedName>
        <fullName>ATP-dependent DNA helicase RecG</fullName>
        <ecNumber evidence="1">5.6.2.4</ecNumber>
    </recommendedName>
    <alternativeName>
        <fullName>DNA branch migration protein RecG</fullName>
    </alternativeName>
    <alternativeName>
        <fullName>Probable DNA 3'-5' helicase RecG</fullName>
    </alternativeName>
</protein>
<proteinExistence type="inferred from homology"/>
<sequence length="682" mass="78120">MSKVHLIESPYALDKIKGIGPKRLALLEELNIKSVEDLVLYLPTRYEDNTVIDLNQADDQATVTVQGEVYSSPTVAFFGRNKSKLTVHLMINHIAVKCVFFNQPYLKKKLELNSIVTIKGKWNRNKQEINGNRIFFNDQKNQEDAHLEPVYRVKEGIKQKQLRDNIRQALSDVTIHEWLTDDLREKYKLETLAYTIQTLHHPIDKQNLLRARRTYAFTELFMFELRMQWLNRLEKTSDEAIEINYDINKVKQFIDSLPFELTDAQKVSVNEIFRDLKAPIRMHRLLQGDVGSGKTIVAAICMYALKTAGYQSALMVPTEILAEQHAESLMQLFGNTMNVALLTGSVKGKKRRLLLEQLENGTIDCLIGTHALIQDDVVFNNVGLVITDEQHRFGVNQRQILREKGAMTNVLFMTATPIPRTLAISVFGEMDVSSIKQLPKGRKPIKTSWAKHEQYDQVLAQMSNELKKGRQAYVICPLIESSEHLEDVQNVVELYESLQSDYGNEKVGLLHGKMTAEDKDQVMQKFSEHEIDILVSTTVVEVGVNVPNATFMMIYDADRFGLSTLHQLRGRVGRSEHQSYCVLIASPKTETGIERMTIMTQTTDGFELSERDLEMRGPGDFFGVKQSGLPDFLVANVVEDYRMLEVARDEAAELIQSGQFFEQQYSHLREFIKQNLRHIRFD</sequence>
<gene>
    <name type="primary">recG</name>
    <name type="ordered locus">SERP0793</name>
</gene>
<evidence type="ECO:0000250" key="1">
    <source>
        <dbReference type="UniProtKB" id="P24230"/>
    </source>
</evidence>
<evidence type="ECO:0000250" key="2">
    <source>
        <dbReference type="UniProtKB" id="Q9WY48"/>
    </source>
</evidence>
<evidence type="ECO:0000255" key="3">
    <source>
        <dbReference type="PROSITE-ProRule" id="PRU00541"/>
    </source>
</evidence>
<evidence type="ECO:0000255" key="4">
    <source>
        <dbReference type="PROSITE-ProRule" id="PRU00542"/>
    </source>
</evidence>
<evidence type="ECO:0000305" key="5"/>
<reference key="1">
    <citation type="journal article" date="2005" name="J. Bacteriol.">
        <title>Insights on evolution of virulence and resistance from the complete genome analysis of an early methicillin-resistant Staphylococcus aureus strain and a biofilm-producing methicillin-resistant Staphylococcus epidermidis strain.</title>
        <authorList>
            <person name="Gill S.R."/>
            <person name="Fouts D.E."/>
            <person name="Archer G.L."/>
            <person name="Mongodin E.F."/>
            <person name="DeBoy R.T."/>
            <person name="Ravel J."/>
            <person name="Paulsen I.T."/>
            <person name="Kolonay J.F."/>
            <person name="Brinkac L.M."/>
            <person name="Beanan M.J."/>
            <person name="Dodson R.J."/>
            <person name="Daugherty S.C."/>
            <person name="Madupu R."/>
            <person name="Angiuoli S.V."/>
            <person name="Durkin A.S."/>
            <person name="Haft D.H."/>
            <person name="Vamathevan J.J."/>
            <person name="Khouri H."/>
            <person name="Utterback T.R."/>
            <person name="Lee C."/>
            <person name="Dimitrov G."/>
            <person name="Jiang L."/>
            <person name="Qin H."/>
            <person name="Weidman J."/>
            <person name="Tran K."/>
            <person name="Kang K.H."/>
            <person name="Hance I.R."/>
            <person name="Nelson K.E."/>
            <person name="Fraser C.M."/>
        </authorList>
    </citation>
    <scope>NUCLEOTIDE SEQUENCE [LARGE SCALE GENOMIC DNA]</scope>
    <source>
        <strain>ATCC 35984 / DSM 28319 / BCRC 17069 / CCUG 31568 / BM 3577 / RP62A</strain>
    </source>
</reference>